<dbReference type="EMBL" id="CP001127">
    <property type="protein sequence ID" value="ACF90326.1"/>
    <property type="molecule type" value="Genomic_DNA"/>
</dbReference>
<dbReference type="RefSeq" id="WP_000872918.1">
    <property type="nucleotide sequence ID" value="NC_011094.1"/>
</dbReference>
<dbReference type="SMR" id="B4TPV0"/>
<dbReference type="KEGG" id="sew:SeSA_A4305"/>
<dbReference type="HOGENOM" id="CLU_072626_4_0_6"/>
<dbReference type="Proteomes" id="UP000001865">
    <property type="component" value="Chromosome"/>
</dbReference>
<dbReference type="GO" id="GO:0005829">
    <property type="term" value="C:cytosol"/>
    <property type="evidence" value="ECO:0007669"/>
    <property type="project" value="TreeGrafter"/>
</dbReference>
<dbReference type="GO" id="GO:0060698">
    <property type="term" value="F:endoribonuclease inhibitor activity"/>
    <property type="evidence" value="ECO:0007669"/>
    <property type="project" value="UniProtKB-UniRule"/>
</dbReference>
<dbReference type="GO" id="GO:0019899">
    <property type="term" value="F:enzyme binding"/>
    <property type="evidence" value="ECO:0007669"/>
    <property type="project" value="UniProtKB-UniRule"/>
</dbReference>
<dbReference type="GO" id="GO:1902369">
    <property type="term" value="P:negative regulation of RNA catabolic process"/>
    <property type="evidence" value="ECO:0007669"/>
    <property type="project" value="TreeGrafter"/>
</dbReference>
<dbReference type="CDD" id="cd16841">
    <property type="entry name" value="RraA_family"/>
    <property type="match status" value="1"/>
</dbReference>
<dbReference type="FunFam" id="3.50.30.40:FF:000001">
    <property type="entry name" value="Regulator of ribonuclease activity A"/>
    <property type="match status" value="1"/>
</dbReference>
<dbReference type="Gene3D" id="3.50.30.40">
    <property type="entry name" value="Ribonuclease E inhibitor RraA/RraA-like"/>
    <property type="match status" value="1"/>
</dbReference>
<dbReference type="HAMAP" id="MF_00471">
    <property type="entry name" value="RraA"/>
    <property type="match status" value="1"/>
</dbReference>
<dbReference type="InterPro" id="IPR010203">
    <property type="entry name" value="RraA"/>
</dbReference>
<dbReference type="InterPro" id="IPR005493">
    <property type="entry name" value="RraA/RraA-like"/>
</dbReference>
<dbReference type="InterPro" id="IPR036704">
    <property type="entry name" value="RraA/RraA-like_sf"/>
</dbReference>
<dbReference type="InterPro" id="IPR014339">
    <property type="entry name" value="RraA_gpbac"/>
</dbReference>
<dbReference type="NCBIfam" id="TIGR01935">
    <property type="entry name" value="NOT-MenG"/>
    <property type="match status" value="1"/>
</dbReference>
<dbReference type="NCBIfam" id="NF006875">
    <property type="entry name" value="PRK09372.1"/>
    <property type="match status" value="1"/>
</dbReference>
<dbReference type="NCBIfam" id="TIGR02998">
    <property type="entry name" value="RraA_entero"/>
    <property type="match status" value="1"/>
</dbReference>
<dbReference type="PANTHER" id="PTHR33254">
    <property type="entry name" value="4-HYDROXY-4-METHYL-2-OXOGLUTARATE ALDOLASE 3-RELATED"/>
    <property type="match status" value="1"/>
</dbReference>
<dbReference type="PANTHER" id="PTHR33254:SF29">
    <property type="entry name" value="REGULATOR OF RIBONUCLEASE ACTIVITY A"/>
    <property type="match status" value="1"/>
</dbReference>
<dbReference type="Pfam" id="PF03737">
    <property type="entry name" value="RraA-like"/>
    <property type="match status" value="1"/>
</dbReference>
<dbReference type="SUPFAM" id="SSF89562">
    <property type="entry name" value="RraA-like"/>
    <property type="match status" value="1"/>
</dbReference>
<evidence type="ECO:0000255" key="1">
    <source>
        <dbReference type="HAMAP-Rule" id="MF_00471"/>
    </source>
</evidence>
<protein>
    <recommendedName>
        <fullName evidence="1">Regulator of ribonuclease activity A</fullName>
    </recommendedName>
</protein>
<feature type="chain" id="PRO_1000194878" description="Regulator of ribonuclease activity A">
    <location>
        <begin position="1"/>
        <end position="161"/>
    </location>
</feature>
<comment type="function">
    <text evidence="1">Globally modulates RNA abundance by binding to RNase E (Rne) and regulating its endonucleolytic activity. Can modulate Rne action in a substrate-dependent manner by altering the composition of the degradosome. Modulates RNA-binding and helicase activities of the degradosome.</text>
</comment>
<comment type="subunit">
    <text evidence="1">Homotrimer. Binds to both RNA-binding sites in the C-terminal region of Rne and to RhlB.</text>
</comment>
<comment type="subcellular location">
    <subcellularLocation>
        <location evidence="1">Cytoplasm</location>
    </subcellularLocation>
</comment>
<comment type="similarity">
    <text evidence="1">Belongs to the RraA family.</text>
</comment>
<organism>
    <name type="scientific">Salmonella schwarzengrund (strain CVM19633)</name>
    <dbReference type="NCBI Taxonomy" id="439843"/>
    <lineage>
        <taxon>Bacteria</taxon>
        <taxon>Pseudomonadati</taxon>
        <taxon>Pseudomonadota</taxon>
        <taxon>Gammaproteobacteria</taxon>
        <taxon>Enterobacterales</taxon>
        <taxon>Enterobacteriaceae</taxon>
        <taxon>Salmonella</taxon>
    </lineage>
</organism>
<reference key="1">
    <citation type="journal article" date="2011" name="J. Bacteriol.">
        <title>Comparative genomics of 28 Salmonella enterica isolates: evidence for CRISPR-mediated adaptive sublineage evolution.</title>
        <authorList>
            <person name="Fricke W.F."/>
            <person name="Mammel M.K."/>
            <person name="McDermott P.F."/>
            <person name="Tartera C."/>
            <person name="White D.G."/>
            <person name="Leclerc J.E."/>
            <person name="Ravel J."/>
            <person name="Cebula T.A."/>
        </authorList>
    </citation>
    <scope>NUCLEOTIDE SEQUENCE [LARGE SCALE GENOMIC DNA]</scope>
    <source>
        <strain>CVM19633</strain>
    </source>
</reference>
<sequence>MKYDTSELCDIYQEDVNVVEPLFSNFGGRSSFGGQIITVKCFEDNGLLYDLLEQNGRGRVLLVDGGGSVRRALVDAELARLATQNEWEGLVIYGAVRQVDDLEELDIGIQAIAAIPVGAAGEGIGESDVRVNFGGVTFFSGDHLYADNTGIILSEDPLDIE</sequence>
<name>RRAA_SALSV</name>
<accession>B4TPV0</accession>
<gene>
    <name evidence="1" type="primary">rraA</name>
    <name type="ordered locus">SeSA_A4305</name>
</gene>
<proteinExistence type="inferred from homology"/>
<keyword id="KW-0963">Cytoplasm</keyword>